<accession>P19216</accession>
<accession>O30599</accession>
<proteinExistence type="inferred from homology"/>
<gene>
    <name type="primary">tsf</name>
</gene>
<keyword id="KW-0963">Cytoplasm</keyword>
<keyword id="KW-0251">Elongation factor</keyword>
<keyword id="KW-0648">Protein biosynthesis</keyword>
<feature type="chain" id="PRO_0000161193" description="Elongation factor Ts">
    <location>
        <begin position="1"/>
        <end position="296"/>
    </location>
</feature>
<feature type="region of interest" description="Involved in Mg(2+) ion dislocation from EF-Tu" evidence="1">
    <location>
        <begin position="79"/>
        <end position="82"/>
    </location>
</feature>
<feature type="sequence conflict" description="In Ref. 1." evidence="2" ref="1">
    <original>TGGNIEEAITWLRE</original>
    <variation>SLAGILKKQLHGYVQ</variation>
    <location>
        <begin position="29"/>
        <end position="42"/>
    </location>
</feature>
<organism>
    <name type="scientific">Spiroplasma citri</name>
    <dbReference type="NCBI Taxonomy" id="2133"/>
    <lineage>
        <taxon>Bacteria</taxon>
        <taxon>Bacillati</taxon>
        <taxon>Mycoplasmatota</taxon>
        <taxon>Mollicutes</taxon>
        <taxon>Entomoplasmatales</taxon>
        <taxon>Spiroplasmataceae</taxon>
        <taxon>Spiroplasma</taxon>
    </lineage>
</organism>
<sequence length="296" mass="32762">MEVTAQLVKELRDRTGAGMLDCKKALEDTGGNIEEAITWLREKGITKAAKKSDRVAAEGLVGLVTKGDKQIIFEVNSETDFVAKNKQFKDLMATVGETLINNDPKTVEDVLKVSVNGEPLETVIVHAIATIGEKITLRRFKTVHLKTDQSLGVYLHSNNRIATVLIFSGKIDETIGKQLAMHVSAMRPQFISRDDISVDFLNSEKPILTAEAKNDPKNAGKPDNILEKMVEGRLNKQLAEISFLDQVFVVNPDQKISDVIKANNVNVVDMIRYEVGEGIEKEELDFASEVMAQVLK</sequence>
<evidence type="ECO:0000250" key="1"/>
<evidence type="ECO:0000305" key="2"/>
<protein>
    <recommendedName>
        <fullName>Elongation factor Ts</fullName>
        <shortName>EF-Ts</shortName>
    </recommendedName>
</protein>
<name>EFTS_SPICI</name>
<comment type="function">
    <text evidence="1">Associates with the EF-Tu.GDP complex and induces the exchange of GDP to GTP. It remains bound to the aminoacyl-tRNA.EF-Tu.GTP complex up to the GTP hydrolysis stage on the ribosome (By similarity).</text>
</comment>
<comment type="subcellular location">
    <subcellularLocation>
        <location evidence="1">Cytoplasm</location>
    </subcellularLocation>
</comment>
<comment type="similarity">
    <text evidence="2">Belongs to the EF-Ts family.</text>
</comment>
<reference key="1">
    <citation type="journal article" date="1990" name="J. Bacteriol.">
        <title>Organization and nucleotide sequences of the Spiroplasma citri genes for ribosomal protein S2, elongation factor Ts, spiralin, phosphofructokinase, pyruvate kinase, and an unidentified protein.</title>
        <authorList>
            <person name="Chevalier C."/>
            <person name="Saillard C."/>
            <person name="Bove J.M."/>
        </authorList>
    </citation>
    <scope>NUCLEOTIDE SEQUENCE [GENOMIC DNA]</scope>
    <source>
        <strain>ATCC 27556 / NCPPB 2647 / R8A2</strain>
    </source>
</reference>
<reference key="2">
    <citation type="journal article" date="1998" name="Curr. Microbiol.">
        <title>Gene organization and transcriptional analysis of the Spiroplasma citri rpsB/tsf/x operon.</title>
        <authorList>
            <person name="Le Dantec L."/>
            <person name="Bove J.M."/>
            <person name="Saillard C."/>
        </authorList>
    </citation>
    <scope>NUCLEOTIDE SEQUENCE [GENOMIC DNA]</scope>
    <source>
        <strain>ATCC 27556 / NCPPB 2647 / R8A2</strain>
    </source>
</reference>
<dbReference type="EMBL" id="AF012877">
    <property type="protein sequence ID" value="AAB69995.1"/>
    <property type="molecule type" value="Genomic_DNA"/>
</dbReference>
<dbReference type="PIR" id="B35270">
    <property type="entry name" value="B35270"/>
</dbReference>
<dbReference type="SMR" id="P19216"/>
<dbReference type="STRING" id="2133.SCITRI_001131"/>
<dbReference type="GO" id="GO:0005737">
    <property type="term" value="C:cytoplasm"/>
    <property type="evidence" value="ECO:0007669"/>
    <property type="project" value="UniProtKB-SubCell"/>
</dbReference>
<dbReference type="GO" id="GO:0003746">
    <property type="term" value="F:translation elongation factor activity"/>
    <property type="evidence" value="ECO:0007669"/>
    <property type="project" value="UniProtKB-UniRule"/>
</dbReference>
<dbReference type="CDD" id="cd14275">
    <property type="entry name" value="UBA_EF-Ts"/>
    <property type="match status" value="1"/>
</dbReference>
<dbReference type="FunFam" id="1.10.8.10:FF:000001">
    <property type="entry name" value="Elongation factor Ts"/>
    <property type="match status" value="1"/>
</dbReference>
<dbReference type="Gene3D" id="1.10.286.20">
    <property type="match status" value="1"/>
</dbReference>
<dbReference type="Gene3D" id="1.10.8.10">
    <property type="entry name" value="DNA helicase RuvA subunit, C-terminal domain"/>
    <property type="match status" value="1"/>
</dbReference>
<dbReference type="Gene3D" id="3.30.479.20">
    <property type="entry name" value="Elongation factor Ts, dimerisation domain"/>
    <property type="match status" value="2"/>
</dbReference>
<dbReference type="HAMAP" id="MF_00050">
    <property type="entry name" value="EF_Ts"/>
    <property type="match status" value="1"/>
</dbReference>
<dbReference type="InterPro" id="IPR036402">
    <property type="entry name" value="EF-Ts_dimer_sf"/>
</dbReference>
<dbReference type="InterPro" id="IPR001816">
    <property type="entry name" value="Transl_elong_EFTs/EF1B"/>
</dbReference>
<dbReference type="InterPro" id="IPR014039">
    <property type="entry name" value="Transl_elong_EFTs/EF1B_dimer"/>
</dbReference>
<dbReference type="InterPro" id="IPR018101">
    <property type="entry name" value="Transl_elong_Ts_CS"/>
</dbReference>
<dbReference type="InterPro" id="IPR009060">
    <property type="entry name" value="UBA-like_sf"/>
</dbReference>
<dbReference type="NCBIfam" id="TIGR00116">
    <property type="entry name" value="tsf"/>
    <property type="match status" value="1"/>
</dbReference>
<dbReference type="PANTHER" id="PTHR11741">
    <property type="entry name" value="ELONGATION FACTOR TS"/>
    <property type="match status" value="1"/>
</dbReference>
<dbReference type="PANTHER" id="PTHR11741:SF0">
    <property type="entry name" value="ELONGATION FACTOR TS, MITOCHONDRIAL"/>
    <property type="match status" value="1"/>
</dbReference>
<dbReference type="Pfam" id="PF00889">
    <property type="entry name" value="EF_TS"/>
    <property type="match status" value="1"/>
</dbReference>
<dbReference type="SUPFAM" id="SSF54713">
    <property type="entry name" value="Elongation factor Ts (EF-Ts), dimerisation domain"/>
    <property type="match status" value="2"/>
</dbReference>
<dbReference type="SUPFAM" id="SSF46934">
    <property type="entry name" value="UBA-like"/>
    <property type="match status" value="1"/>
</dbReference>
<dbReference type="PROSITE" id="PS01126">
    <property type="entry name" value="EF_TS_1"/>
    <property type="match status" value="1"/>
</dbReference>
<dbReference type="PROSITE" id="PS01127">
    <property type="entry name" value="EF_TS_2"/>
    <property type="match status" value="1"/>
</dbReference>